<evidence type="ECO:0000255" key="1">
    <source>
        <dbReference type="HAMAP-Rule" id="MF_01123"/>
    </source>
</evidence>
<protein>
    <recommendedName>
        <fullName evidence="1">Acetyl-coenzyme A synthetase</fullName>
        <shortName evidence="1">AcCoA synthetase</shortName>
        <shortName evidence="1">Acs</shortName>
        <ecNumber evidence="1">6.2.1.1</ecNumber>
    </recommendedName>
    <alternativeName>
        <fullName evidence="1">Acetate--CoA ligase</fullName>
    </alternativeName>
    <alternativeName>
        <fullName evidence="1">Acyl-activating enzyme</fullName>
    </alternativeName>
</protein>
<reference key="1">
    <citation type="journal article" date="2006" name="J. Bacteriol.">
        <title>The genome sequence of the obligately chemolithoautotrophic, facultatively anaerobic bacterium Thiobacillus denitrificans.</title>
        <authorList>
            <person name="Beller H.R."/>
            <person name="Chain P.S."/>
            <person name="Letain T.E."/>
            <person name="Chakicherla A."/>
            <person name="Larimer F.W."/>
            <person name="Richardson P.M."/>
            <person name="Coleman M.A."/>
            <person name="Wood A.P."/>
            <person name="Kelly D.P."/>
        </authorList>
    </citation>
    <scope>NUCLEOTIDE SEQUENCE [LARGE SCALE GENOMIC DNA]</scope>
    <source>
        <strain>ATCC 25259 / T1</strain>
    </source>
</reference>
<feature type="chain" id="PRO_1000065330" description="Acetyl-coenzyme A synthetase">
    <location>
        <begin position="1"/>
        <end position="655"/>
    </location>
</feature>
<feature type="binding site" evidence="1">
    <location>
        <begin position="196"/>
        <end position="199"/>
    </location>
    <ligand>
        <name>CoA</name>
        <dbReference type="ChEBI" id="CHEBI:57287"/>
    </ligand>
</feature>
<feature type="binding site" evidence="1">
    <location>
        <position position="316"/>
    </location>
    <ligand>
        <name>CoA</name>
        <dbReference type="ChEBI" id="CHEBI:57287"/>
    </ligand>
</feature>
<feature type="binding site" evidence="1">
    <location>
        <begin position="392"/>
        <end position="394"/>
    </location>
    <ligand>
        <name>ATP</name>
        <dbReference type="ChEBI" id="CHEBI:30616"/>
    </ligand>
</feature>
<feature type="binding site" evidence="1">
    <location>
        <begin position="416"/>
        <end position="421"/>
    </location>
    <ligand>
        <name>ATP</name>
        <dbReference type="ChEBI" id="CHEBI:30616"/>
    </ligand>
</feature>
<feature type="binding site" evidence="1">
    <location>
        <position position="507"/>
    </location>
    <ligand>
        <name>ATP</name>
        <dbReference type="ChEBI" id="CHEBI:30616"/>
    </ligand>
</feature>
<feature type="binding site" evidence="1">
    <location>
        <position position="522"/>
    </location>
    <ligand>
        <name>ATP</name>
        <dbReference type="ChEBI" id="CHEBI:30616"/>
    </ligand>
</feature>
<feature type="binding site" evidence="1">
    <location>
        <position position="530"/>
    </location>
    <ligand>
        <name>CoA</name>
        <dbReference type="ChEBI" id="CHEBI:57287"/>
    </ligand>
</feature>
<feature type="binding site" evidence="1">
    <location>
        <position position="533"/>
    </location>
    <ligand>
        <name>ATP</name>
        <dbReference type="ChEBI" id="CHEBI:30616"/>
    </ligand>
</feature>
<feature type="binding site" evidence="1">
    <location>
        <position position="544"/>
    </location>
    <ligand>
        <name>Mg(2+)</name>
        <dbReference type="ChEBI" id="CHEBI:18420"/>
    </ligand>
</feature>
<feature type="binding site" evidence="1">
    <location>
        <position position="549"/>
    </location>
    <ligand>
        <name>Mg(2+)</name>
        <dbReference type="ChEBI" id="CHEBI:18420"/>
    </ligand>
</feature>
<feature type="modified residue" description="N6-acetyllysine" evidence="1">
    <location>
        <position position="619"/>
    </location>
</feature>
<name>ACSA_THIDA</name>
<dbReference type="EC" id="6.2.1.1" evidence="1"/>
<dbReference type="EMBL" id="CP000116">
    <property type="protein sequence ID" value="AAZ96457.1"/>
    <property type="molecule type" value="Genomic_DNA"/>
</dbReference>
<dbReference type="RefSeq" id="WP_011311016.1">
    <property type="nucleotide sequence ID" value="NC_007404.1"/>
</dbReference>
<dbReference type="SMR" id="Q3SLF4"/>
<dbReference type="STRING" id="292415.Tbd_0504"/>
<dbReference type="KEGG" id="tbd:Tbd_0504"/>
<dbReference type="eggNOG" id="COG0365">
    <property type="taxonomic scope" value="Bacteria"/>
</dbReference>
<dbReference type="HOGENOM" id="CLU_000022_3_6_4"/>
<dbReference type="OrthoDB" id="9766486at2"/>
<dbReference type="Proteomes" id="UP000008291">
    <property type="component" value="Chromosome"/>
</dbReference>
<dbReference type="GO" id="GO:0005829">
    <property type="term" value="C:cytosol"/>
    <property type="evidence" value="ECO:0007669"/>
    <property type="project" value="TreeGrafter"/>
</dbReference>
<dbReference type="GO" id="GO:0003987">
    <property type="term" value="F:acetate-CoA ligase activity"/>
    <property type="evidence" value="ECO:0007669"/>
    <property type="project" value="UniProtKB-UniRule"/>
</dbReference>
<dbReference type="GO" id="GO:0016208">
    <property type="term" value="F:AMP binding"/>
    <property type="evidence" value="ECO:0007669"/>
    <property type="project" value="InterPro"/>
</dbReference>
<dbReference type="GO" id="GO:0005524">
    <property type="term" value="F:ATP binding"/>
    <property type="evidence" value="ECO:0007669"/>
    <property type="project" value="UniProtKB-KW"/>
</dbReference>
<dbReference type="GO" id="GO:0046872">
    <property type="term" value="F:metal ion binding"/>
    <property type="evidence" value="ECO:0007669"/>
    <property type="project" value="UniProtKB-KW"/>
</dbReference>
<dbReference type="GO" id="GO:0019427">
    <property type="term" value="P:acetyl-CoA biosynthetic process from acetate"/>
    <property type="evidence" value="ECO:0007669"/>
    <property type="project" value="InterPro"/>
</dbReference>
<dbReference type="CDD" id="cd05966">
    <property type="entry name" value="ACS"/>
    <property type="match status" value="1"/>
</dbReference>
<dbReference type="FunFam" id="3.40.50.12780:FF:000001">
    <property type="entry name" value="Acetyl-coenzyme A synthetase"/>
    <property type="match status" value="1"/>
</dbReference>
<dbReference type="Gene3D" id="3.30.300.30">
    <property type="match status" value="1"/>
</dbReference>
<dbReference type="Gene3D" id="3.40.50.12780">
    <property type="entry name" value="N-terminal domain of ligase-like"/>
    <property type="match status" value="1"/>
</dbReference>
<dbReference type="HAMAP" id="MF_01123">
    <property type="entry name" value="Ac_CoA_synth"/>
    <property type="match status" value="1"/>
</dbReference>
<dbReference type="InterPro" id="IPR011904">
    <property type="entry name" value="Ac_CoA_lig"/>
</dbReference>
<dbReference type="InterPro" id="IPR032387">
    <property type="entry name" value="ACAS_N"/>
</dbReference>
<dbReference type="InterPro" id="IPR025110">
    <property type="entry name" value="AMP-bd_C"/>
</dbReference>
<dbReference type="InterPro" id="IPR045851">
    <property type="entry name" value="AMP-bd_C_sf"/>
</dbReference>
<dbReference type="InterPro" id="IPR020845">
    <property type="entry name" value="AMP-binding_CS"/>
</dbReference>
<dbReference type="InterPro" id="IPR000873">
    <property type="entry name" value="AMP-dep_synth/lig_dom"/>
</dbReference>
<dbReference type="InterPro" id="IPR042099">
    <property type="entry name" value="ANL_N_sf"/>
</dbReference>
<dbReference type="NCBIfam" id="TIGR02188">
    <property type="entry name" value="Ac_CoA_lig_AcsA"/>
    <property type="match status" value="1"/>
</dbReference>
<dbReference type="NCBIfam" id="NF001208">
    <property type="entry name" value="PRK00174.1"/>
    <property type="match status" value="1"/>
</dbReference>
<dbReference type="PANTHER" id="PTHR24095">
    <property type="entry name" value="ACETYL-COENZYME A SYNTHETASE"/>
    <property type="match status" value="1"/>
</dbReference>
<dbReference type="PANTHER" id="PTHR24095:SF14">
    <property type="entry name" value="ACETYL-COENZYME A SYNTHETASE 1"/>
    <property type="match status" value="1"/>
</dbReference>
<dbReference type="Pfam" id="PF16177">
    <property type="entry name" value="ACAS_N"/>
    <property type="match status" value="1"/>
</dbReference>
<dbReference type="Pfam" id="PF00501">
    <property type="entry name" value="AMP-binding"/>
    <property type="match status" value="1"/>
</dbReference>
<dbReference type="Pfam" id="PF13193">
    <property type="entry name" value="AMP-binding_C"/>
    <property type="match status" value="1"/>
</dbReference>
<dbReference type="SUPFAM" id="SSF56801">
    <property type="entry name" value="Acetyl-CoA synthetase-like"/>
    <property type="match status" value="1"/>
</dbReference>
<dbReference type="PROSITE" id="PS00455">
    <property type="entry name" value="AMP_BINDING"/>
    <property type="match status" value="1"/>
</dbReference>
<comment type="function">
    <text evidence="1">Catalyzes the conversion of acetate into acetyl-CoA (AcCoA), an essential intermediate at the junction of anabolic and catabolic pathways. AcsA undergoes a two-step reaction. In the first half reaction, AcsA combines acetate with ATP to form acetyl-adenylate (AcAMP) intermediate. In the second half reaction, it can then transfer the acetyl group from AcAMP to the sulfhydryl group of CoA, forming the product AcCoA.</text>
</comment>
<comment type="catalytic activity">
    <reaction evidence="1">
        <text>acetate + ATP + CoA = acetyl-CoA + AMP + diphosphate</text>
        <dbReference type="Rhea" id="RHEA:23176"/>
        <dbReference type="ChEBI" id="CHEBI:30089"/>
        <dbReference type="ChEBI" id="CHEBI:30616"/>
        <dbReference type="ChEBI" id="CHEBI:33019"/>
        <dbReference type="ChEBI" id="CHEBI:57287"/>
        <dbReference type="ChEBI" id="CHEBI:57288"/>
        <dbReference type="ChEBI" id="CHEBI:456215"/>
        <dbReference type="EC" id="6.2.1.1"/>
    </reaction>
</comment>
<comment type="cofactor">
    <cofactor evidence="1">
        <name>Mg(2+)</name>
        <dbReference type="ChEBI" id="CHEBI:18420"/>
    </cofactor>
</comment>
<comment type="PTM">
    <text evidence="1">Acetylated. Deacetylation by the SIR2-homolog deacetylase activates the enzyme.</text>
</comment>
<comment type="similarity">
    <text evidence="1">Belongs to the ATP-dependent AMP-binding enzyme family.</text>
</comment>
<sequence length="655" mass="72049">MAAIESVLTETRVFPPAEAFVTQANVAGMEAYQALCRRAEADYEGFWAELARQHIDWKTPFTRTLDESDAPFYRWFDDGELNVSYNCLDRHLATRGDKTALIFEADDGSVRTVTYKELHARVCQFANGLKSLGVGKGDRVIVYMPMSIEAVVAMQACARIGAIHSVVFGGFSAKSLFERIEDAQAKLIVTADESLRGGKAVPLKRAADEALAMGDTSCVERVVVYRRSGGEVNWSARDLWWHELTQTQAETCEPVWVSAEHPLFILYTSGSTGKPKGVQHSTGGYLLGALLSMLWVFDAKADNDVYWCTADVGWITGHTYVAYGPLALGMTEVIFEGIPTYPHAGRFWETIAKHKVTTFYTAPTAIRSLIKLGSELPAQYDLSSLRLLGTVGEPINPEAWMWYHEVIGGGRCPIVDTWWQTETGAHMIAPLPGAVPTKPGSCTLPLPGIMAAVTDEHGGPVAKGQGGYLVIKRPFPSQLRTLWGDPERFKKTYFPEEMGGKTYLAGDSAHRDDDGYFWIMGRIDDVLNVSGHRLGTMEIESALVSNPRVAEAAVVGRPHEVKGEAVVAYVVLKGARAVGDEAKDIARELRDWVGKEIGPIAKPDEIRFGENLPKTRSGKIMRRLLRAIAKGEEITQDVSTLENPAILDQLKEAVK</sequence>
<gene>
    <name evidence="1" type="primary">acsA</name>
    <name type="ordered locus">Tbd_0504</name>
</gene>
<proteinExistence type="inferred from homology"/>
<keyword id="KW-0007">Acetylation</keyword>
<keyword id="KW-0067">ATP-binding</keyword>
<keyword id="KW-0436">Ligase</keyword>
<keyword id="KW-0460">Magnesium</keyword>
<keyword id="KW-0479">Metal-binding</keyword>
<keyword id="KW-0547">Nucleotide-binding</keyword>
<keyword id="KW-1185">Reference proteome</keyword>
<organism>
    <name type="scientific">Thiobacillus denitrificans (strain ATCC 25259 / T1)</name>
    <dbReference type="NCBI Taxonomy" id="292415"/>
    <lineage>
        <taxon>Bacteria</taxon>
        <taxon>Pseudomonadati</taxon>
        <taxon>Pseudomonadota</taxon>
        <taxon>Betaproteobacteria</taxon>
        <taxon>Nitrosomonadales</taxon>
        <taxon>Thiobacillaceae</taxon>
        <taxon>Thiobacillus</taxon>
    </lineage>
</organism>
<accession>Q3SLF4</accession>